<feature type="chain" id="PRO_1000057110" description="Octanoyltransferase">
    <location>
        <begin position="1"/>
        <end position="222"/>
    </location>
</feature>
<feature type="domain" description="BPL/LPL catalytic" evidence="2">
    <location>
        <begin position="35"/>
        <end position="210"/>
    </location>
</feature>
<feature type="active site" description="Acyl-thioester intermediate" evidence="1">
    <location>
        <position position="172"/>
    </location>
</feature>
<feature type="binding site" evidence="1">
    <location>
        <begin position="74"/>
        <end position="81"/>
    </location>
    <ligand>
        <name>substrate</name>
    </ligand>
</feature>
<feature type="binding site" evidence="1">
    <location>
        <begin position="141"/>
        <end position="143"/>
    </location>
    <ligand>
        <name>substrate</name>
    </ligand>
</feature>
<feature type="binding site" evidence="1">
    <location>
        <begin position="154"/>
        <end position="156"/>
    </location>
    <ligand>
        <name>substrate</name>
    </ligand>
</feature>
<feature type="site" description="Lowers pKa of active site Cys" evidence="1">
    <location>
        <position position="138"/>
    </location>
</feature>
<accession>A8GB10</accession>
<comment type="function">
    <text evidence="1">Catalyzes the transfer of endogenously produced octanoic acid from octanoyl-acyl-carrier-protein onto the lipoyl domains of lipoate-dependent enzymes. Lipoyl-ACP can also act as a substrate although octanoyl-ACP is likely to be the physiological substrate.</text>
</comment>
<comment type="catalytic activity">
    <reaction evidence="1">
        <text>octanoyl-[ACP] + L-lysyl-[protein] = N(6)-octanoyl-L-lysyl-[protein] + holo-[ACP] + H(+)</text>
        <dbReference type="Rhea" id="RHEA:17665"/>
        <dbReference type="Rhea" id="RHEA-COMP:9636"/>
        <dbReference type="Rhea" id="RHEA-COMP:9685"/>
        <dbReference type="Rhea" id="RHEA-COMP:9752"/>
        <dbReference type="Rhea" id="RHEA-COMP:9928"/>
        <dbReference type="ChEBI" id="CHEBI:15378"/>
        <dbReference type="ChEBI" id="CHEBI:29969"/>
        <dbReference type="ChEBI" id="CHEBI:64479"/>
        <dbReference type="ChEBI" id="CHEBI:78463"/>
        <dbReference type="ChEBI" id="CHEBI:78809"/>
        <dbReference type="EC" id="2.3.1.181"/>
    </reaction>
</comment>
<comment type="pathway">
    <text evidence="1">Protein modification; protein lipoylation via endogenous pathway; protein N(6)-(lipoyl)lysine from octanoyl-[acyl-carrier-protein]: step 1/2.</text>
</comment>
<comment type="subcellular location">
    <subcellularLocation>
        <location evidence="1">Cytoplasm</location>
    </subcellularLocation>
</comment>
<comment type="miscellaneous">
    <text evidence="1">In the reaction, the free carboxyl group of octanoic acid is attached via an amide linkage to the epsilon-amino group of a specific lysine residue of lipoyl domains of lipoate-dependent enzymes.</text>
</comment>
<comment type="similarity">
    <text evidence="1">Belongs to the LipB family.</text>
</comment>
<evidence type="ECO:0000255" key="1">
    <source>
        <dbReference type="HAMAP-Rule" id="MF_00013"/>
    </source>
</evidence>
<evidence type="ECO:0000255" key="2">
    <source>
        <dbReference type="PROSITE-ProRule" id="PRU01067"/>
    </source>
</evidence>
<keyword id="KW-0012">Acyltransferase</keyword>
<keyword id="KW-0963">Cytoplasm</keyword>
<keyword id="KW-0808">Transferase</keyword>
<dbReference type="EC" id="2.3.1.181" evidence="1"/>
<dbReference type="EMBL" id="CP000826">
    <property type="protein sequence ID" value="ABV40300.1"/>
    <property type="molecule type" value="Genomic_DNA"/>
</dbReference>
<dbReference type="SMR" id="A8GB10"/>
<dbReference type="STRING" id="399741.Spro_1196"/>
<dbReference type="KEGG" id="spe:Spro_1196"/>
<dbReference type="eggNOG" id="COG0321">
    <property type="taxonomic scope" value="Bacteria"/>
</dbReference>
<dbReference type="HOGENOM" id="CLU_035168_3_1_6"/>
<dbReference type="UniPathway" id="UPA00538">
    <property type="reaction ID" value="UER00592"/>
</dbReference>
<dbReference type="GO" id="GO:0005737">
    <property type="term" value="C:cytoplasm"/>
    <property type="evidence" value="ECO:0007669"/>
    <property type="project" value="UniProtKB-SubCell"/>
</dbReference>
<dbReference type="GO" id="GO:0033819">
    <property type="term" value="F:lipoyl(octanoyl) transferase activity"/>
    <property type="evidence" value="ECO:0007669"/>
    <property type="project" value="UniProtKB-EC"/>
</dbReference>
<dbReference type="GO" id="GO:0036211">
    <property type="term" value="P:protein modification process"/>
    <property type="evidence" value="ECO:0007669"/>
    <property type="project" value="InterPro"/>
</dbReference>
<dbReference type="CDD" id="cd16444">
    <property type="entry name" value="LipB"/>
    <property type="match status" value="1"/>
</dbReference>
<dbReference type="FunFam" id="3.30.930.10:FF:000020">
    <property type="entry name" value="Octanoyltransferase"/>
    <property type="match status" value="1"/>
</dbReference>
<dbReference type="Gene3D" id="3.30.930.10">
    <property type="entry name" value="Bira Bifunctional Protein, Domain 2"/>
    <property type="match status" value="1"/>
</dbReference>
<dbReference type="HAMAP" id="MF_00013">
    <property type="entry name" value="LipB"/>
    <property type="match status" value="1"/>
</dbReference>
<dbReference type="InterPro" id="IPR045864">
    <property type="entry name" value="aa-tRNA-synth_II/BPL/LPL"/>
</dbReference>
<dbReference type="InterPro" id="IPR004143">
    <property type="entry name" value="BPL_LPL_catalytic"/>
</dbReference>
<dbReference type="InterPro" id="IPR000544">
    <property type="entry name" value="Octanoyltransferase"/>
</dbReference>
<dbReference type="InterPro" id="IPR020605">
    <property type="entry name" value="Octanoyltransferase_CS"/>
</dbReference>
<dbReference type="NCBIfam" id="TIGR00214">
    <property type="entry name" value="lipB"/>
    <property type="match status" value="1"/>
</dbReference>
<dbReference type="NCBIfam" id="NF010922">
    <property type="entry name" value="PRK14342.1"/>
    <property type="match status" value="1"/>
</dbReference>
<dbReference type="PANTHER" id="PTHR10993:SF7">
    <property type="entry name" value="LIPOYLTRANSFERASE 2, MITOCHONDRIAL-RELATED"/>
    <property type="match status" value="1"/>
</dbReference>
<dbReference type="PANTHER" id="PTHR10993">
    <property type="entry name" value="OCTANOYLTRANSFERASE"/>
    <property type="match status" value="1"/>
</dbReference>
<dbReference type="Pfam" id="PF21948">
    <property type="entry name" value="LplA-B_cat"/>
    <property type="match status" value="1"/>
</dbReference>
<dbReference type="PIRSF" id="PIRSF016262">
    <property type="entry name" value="LPLase"/>
    <property type="match status" value="1"/>
</dbReference>
<dbReference type="SUPFAM" id="SSF55681">
    <property type="entry name" value="Class II aaRS and biotin synthetases"/>
    <property type="match status" value="1"/>
</dbReference>
<dbReference type="PROSITE" id="PS51733">
    <property type="entry name" value="BPL_LPL_CATALYTIC"/>
    <property type="match status" value="1"/>
</dbReference>
<dbReference type="PROSITE" id="PS01313">
    <property type="entry name" value="LIPB"/>
    <property type="match status" value="1"/>
</dbReference>
<sequence>MTLLQPDKIILRQLGLQPYEPVSQAMHNFTDRRTETTPDELWLVQHQPVFTQGQAGKAEHLLMPGDIPVVQSDRGGQVTYHGPGQQVMYVMIDLKRNKVGVRQLVTAIEDTVINTLAHFHIESRARPDAPGVYVGEQKICSLGLRIRKGSSFHGLALNVAMDLSPFQRINPCGYAGMQMAQVSALAPGVGIEDVHPVLVQEFVHLLGYPKVELRNWNLHDYE</sequence>
<gene>
    <name evidence="1" type="primary">lipB</name>
    <name type="ordered locus">Spro_1196</name>
</gene>
<protein>
    <recommendedName>
        <fullName evidence="1">Octanoyltransferase</fullName>
        <ecNumber evidence="1">2.3.1.181</ecNumber>
    </recommendedName>
    <alternativeName>
        <fullName evidence="1">Lipoate-protein ligase B</fullName>
    </alternativeName>
    <alternativeName>
        <fullName evidence="1">Lipoyl/octanoyl transferase</fullName>
    </alternativeName>
    <alternativeName>
        <fullName evidence="1">Octanoyl-[acyl-carrier-protein]-protein N-octanoyltransferase</fullName>
    </alternativeName>
</protein>
<organism>
    <name type="scientific">Serratia proteamaculans (strain 568)</name>
    <dbReference type="NCBI Taxonomy" id="399741"/>
    <lineage>
        <taxon>Bacteria</taxon>
        <taxon>Pseudomonadati</taxon>
        <taxon>Pseudomonadota</taxon>
        <taxon>Gammaproteobacteria</taxon>
        <taxon>Enterobacterales</taxon>
        <taxon>Yersiniaceae</taxon>
        <taxon>Serratia</taxon>
    </lineage>
</organism>
<proteinExistence type="inferred from homology"/>
<name>LIPB_SERP5</name>
<reference key="1">
    <citation type="submission" date="2007-09" db="EMBL/GenBank/DDBJ databases">
        <title>Complete sequence of chromosome of Serratia proteamaculans 568.</title>
        <authorList>
            <consortium name="US DOE Joint Genome Institute"/>
            <person name="Copeland A."/>
            <person name="Lucas S."/>
            <person name="Lapidus A."/>
            <person name="Barry K."/>
            <person name="Glavina del Rio T."/>
            <person name="Dalin E."/>
            <person name="Tice H."/>
            <person name="Pitluck S."/>
            <person name="Chain P."/>
            <person name="Malfatti S."/>
            <person name="Shin M."/>
            <person name="Vergez L."/>
            <person name="Schmutz J."/>
            <person name="Larimer F."/>
            <person name="Land M."/>
            <person name="Hauser L."/>
            <person name="Kyrpides N."/>
            <person name="Kim E."/>
            <person name="Taghavi S."/>
            <person name="Newman L."/>
            <person name="Vangronsveld J."/>
            <person name="van der Lelie D."/>
            <person name="Richardson P."/>
        </authorList>
    </citation>
    <scope>NUCLEOTIDE SEQUENCE [LARGE SCALE GENOMIC DNA]</scope>
    <source>
        <strain>568</strain>
    </source>
</reference>